<sequence length="82" mass="8424">MAKNLNTVSFTVLLLVLLMASTGILETEAACFKFLGECGAVPFPGTNADCTSCCVGNFGSAVCAGRVEVEGGVKHCHCYGTS</sequence>
<evidence type="ECO:0000250" key="1"/>
<evidence type="ECO:0000255" key="2"/>
<evidence type="ECO:0000305" key="3"/>
<reference key="1">
    <citation type="journal article" date="2000" name="Nature">
        <title>Sequence and analysis of chromosome 1 of the plant Arabidopsis thaliana.</title>
        <authorList>
            <person name="Theologis A."/>
            <person name="Ecker J.R."/>
            <person name="Palm C.J."/>
            <person name="Federspiel N.A."/>
            <person name="Kaul S."/>
            <person name="White O."/>
            <person name="Alonso J."/>
            <person name="Altafi H."/>
            <person name="Araujo R."/>
            <person name="Bowman C.L."/>
            <person name="Brooks S.Y."/>
            <person name="Buehler E."/>
            <person name="Chan A."/>
            <person name="Chao Q."/>
            <person name="Chen H."/>
            <person name="Cheuk R.F."/>
            <person name="Chin C.W."/>
            <person name="Chung M.K."/>
            <person name="Conn L."/>
            <person name="Conway A.B."/>
            <person name="Conway A.R."/>
            <person name="Creasy T.H."/>
            <person name="Dewar K."/>
            <person name="Dunn P."/>
            <person name="Etgu P."/>
            <person name="Feldblyum T.V."/>
            <person name="Feng J.-D."/>
            <person name="Fong B."/>
            <person name="Fujii C.Y."/>
            <person name="Gill J.E."/>
            <person name="Goldsmith A.D."/>
            <person name="Haas B."/>
            <person name="Hansen N.F."/>
            <person name="Hughes B."/>
            <person name="Huizar L."/>
            <person name="Hunter J.L."/>
            <person name="Jenkins J."/>
            <person name="Johnson-Hopson C."/>
            <person name="Khan S."/>
            <person name="Khaykin E."/>
            <person name="Kim C.J."/>
            <person name="Koo H.L."/>
            <person name="Kremenetskaia I."/>
            <person name="Kurtz D.B."/>
            <person name="Kwan A."/>
            <person name="Lam B."/>
            <person name="Langin-Hooper S."/>
            <person name="Lee A."/>
            <person name="Lee J.M."/>
            <person name="Lenz C.A."/>
            <person name="Li J.H."/>
            <person name="Li Y.-P."/>
            <person name="Lin X."/>
            <person name="Liu S.X."/>
            <person name="Liu Z.A."/>
            <person name="Luros J.S."/>
            <person name="Maiti R."/>
            <person name="Marziali A."/>
            <person name="Militscher J."/>
            <person name="Miranda M."/>
            <person name="Nguyen M."/>
            <person name="Nierman W.C."/>
            <person name="Osborne B.I."/>
            <person name="Pai G."/>
            <person name="Peterson J."/>
            <person name="Pham P.K."/>
            <person name="Rizzo M."/>
            <person name="Rooney T."/>
            <person name="Rowley D."/>
            <person name="Sakano H."/>
            <person name="Salzberg S.L."/>
            <person name="Schwartz J.R."/>
            <person name="Shinn P."/>
            <person name="Southwick A.M."/>
            <person name="Sun H."/>
            <person name="Tallon L.J."/>
            <person name="Tambunga G."/>
            <person name="Toriumi M.J."/>
            <person name="Town C.D."/>
            <person name="Utterback T."/>
            <person name="Van Aken S."/>
            <person name="Vaysberg M."/>
            <person name="Vysotskaia V.S."/>
            <person name="Walker M."/>
            <person name="Wu D."/>
            <person name="Yu G."/>
            <person name="Fraser C.M."/>
            <person name="Venter J.C."/>
            <person name="Davis R.W."/>
        </authorList>
    </citation>
    <scope>NUCLEOTIDE SEQUENCE [LARGE SCALE GENOMIC DNA]</scope>
    <source>
        <strain>cv. Columbia</strain>
    </source>
</reference>
<reference key="2">
    <citation type="journal article" date="2017" name="Plant J.">
        <title>Araport11: a complete reannotation of the Arabidopsis thaliana reference genome.</title>
        <authorList>
            <person name="Cheng C.Y."/>
            <person name="Krishnakumar V."/>
            <person name="Chan A.P."/>
            <person name="Thibaud-Nissen F."/>
            <person name="Schobel S."/>
            <person name="Town C.D."/>
        </authorList>
    </citation>
    <scope>GENOME REANNOTATION</scope>
    <source>
        <strain>cv. Columbia</strain>
    </source>
</reference>
<reference key="3">
    <citation type="journal article" date="2007" name="BMC Genomics">
        <title>Experimental validation of novel genes predicted in the un-annotated regions of the Arabidopsis genome.</title>
        <authorList>
            <person name="Moskal W.A. Jr."/>
            <person name="Wu H.C."/>
            <person name="Underwood B.A."/>
            <person name="Wang W."/>
            <person name="Town C.D."/>
            <person name="Xiao Y.-L."/>
        </authorList>
    </citation>
    <scope>NUCLEOTIDE SEQUENCE [LARGE SCALE MRNA]</scope>
    <source>
        <strain>cv. Columbia</strain>
    </source>
</reference>
<reference key="4">
    <citation type="journal article" date="2005" name="Plant Physiol.">
        <title>Genome organization of more than 300 defensin-like genes in Arabidopsis.</title>
        <authorList>
            <person name="Silverstein K.A.T."/>
            <person name="Graham M.A."/>
            <person name="Paape T.D."/>
            <person name="VandenBosch K.A."/>
        </authorList>
    </citation>
    <scope>GENE FAMILY</scope>
</reference>
<proteinExistence type="inferred from homology"/>
<protein>
    <recommendedName>
        <fullName>Defensin-like protein 208</fullName>
    </recommendedName>
</protein>
<comment type="subcellular location">
    <subcellularLocation>
        <location evidence="1">Secreted</location>
    </subcellularLocation>
</comment>
<comment type="alternative products">
    <event type="alternative splicing"/>
    <isoform>
        <id>Q2V2Q8-1</id>
        <name>1</name>
        <sequence type="displayed"/>
    </isoform>
    <text>A number of isoforms are produced. According to EST sequences.</text>
</comment>
<comment type="similarity">
    <text evidence="3">Belongs to the DEFL family.</text>
</comment>
<comment type="caution">
    <text evidence="3">Lacks 1 of the 4 disulfide bonds, which are conserved features of the family.</text>
</comment>
<comment type="sequence caution" evidence="3">
    <conflict type="frameshift">
        <sequence resource="EMBL" id="AC015446"/>
    </conflict>
</comment>
<feature type="signal peptide" evidence="2">
    <location>
        <begin position="1"/>
        <end position="29"/>
    </location>
</feature>
<feature type="chain" id="PRO_0000379700" description="Defensin-like protein 208">
    <location>
        <begin position="30"/>
        <end position="82"/>
    </location>
</feature>
<feature type="disulfide bond" evidence="1">
    <location>
        <begin position="38"/>
        <end position="63"/>
    </location>
</feature>
<feature type="disulfide bond" evidence="1">
    <location>
        <begin position="50"/>
        <end position="76"/>
    </location>
</feature>
<feature type="disulfide bond" evidence="1">
    <location>
        <begin position="54"/>
        <end position="78"/>
    </location>
</feature>
<accession>Q2V2Q8</accession>
<gene>
    <name type="ordered locus">At1g34047</name>
    <name type="ORF">F12G12</name>
</gene>
<name>DF208_ARATH</name>
<dbReference type="EMBL" id="AC015446">
    <property type="status" value="NOT_ANNOTATED_CDS"/>
    <property type="molecule type" value="Genomic_DNA"/>
</dbReference>
<dbReference type="EMBL" id="CP002684">
    <property type="protein sequence ID" value="AEE31664.1"/>
    <property type="molecule type" value="Genomic_DNA"/>
</dbReference>
<dbReference type="EMBL" id="EF182862">
    <property type="status" value="NOT_ANNOTATED_CDS"/>
    <property type="molecule type" value="mRNA"/>
</dbReference>
<dbReference type="RefSeq" id="NP_001031138.4">
    <molecule id="Q2V2Q8-1"/>
    <property type="nucleotide sequence ID" value="NM_001036061.4"/>
</dbReference>
<dbReference type="SMR" id="Q2V2Q8"/>
<dbReference type="STRING" id="3702.Q2V2Q8"/>
<dbReference type="PaxDb" id="3702-AT1G34047.2"/>
<dbReference type="EnsemblPlants" id="AT1G34047.1">
    <molecule id="Q2V2Q8-1"/>
    <property type="protein sequence ID" value="AT1G34047.1"/>
    <property type="gene ID" value="AT1G34047"/>
</dbReference>
<dbReference type="GeneID" id="3766907"/>
<dbReference type="Gramene" id="AT1G34047.1">
    <molecule id="Q2V2Q8-1"/>
    <property type="protein sequence ID" value="AT1G34047.1"/>
    <property type="gene ID" value="AT1G34047"/>
</dbReference>
<dbReference type="KEGG" id="ath:AT1G34047"/>
<dbReference type="Araport" id="AT1G34047"/>
<dbReference type="TAIR" id="AT1G34047"/>
<dbReference type="eggNOG" id="KOG1075">
    <property type="taxonomic scope" value="Eukaryota"/>
</dbReference>
<dbReference type="InParanoid" id="Q2V2Q8"/>
<dbReference type="OrthoDB" id="1055496at2759"/>
<dbReference type="PhylomeDB" id="Q2V2Q8"/>
<dbReference type="PRO" id="PR:Q2V2Q8"/>
<dbReference type="Proteomes" id="UP000006548">
    <property type="component" value="Chromosome 1"/>
</dbReference>
<dbReference type="ExpressionAtlas" id="Q2V2Q8">
    <property type="expression patterns" value="baseline"/>
</dbReference>
<dbReference type="GO" id="GO:0005576">
    <property type="term" value="C:extracellular region"/>
    <property type="evidence" value="ECO:0007669"/>
    <property type="project" value="UniProtKB-SubCell"/>
</dbReference>
<dbReference type="GO" id="GO:0050832">
    <property type="term" value="P:defense response to fungus"/>
    <property type="evidence" value="ECO:0007669"/>
    <property type="project" value="UniProtKB-KW"/>
</dbReference>
<dbReference type="GO" id="GO:0031640">
    <property type="term" value="P:killing of cells of another organism"/>
    <property type="evidence" value="ECO:0007669"/>
    <property type="project" value="UniProtKB-KW"/>
</dbReference>
<keyword id="KW-0025">Alternative splicing</keyword>
<keyword id="KW-0929">Antimicrobial</keyword>
<keyword id="KW-1015">Disulfide bond</keyword>
<keyword id="KW-0295">Fungicide</keyword>
<keyword id="KW-0611">Plant defense</keyword>
<keyword id="KW-1185">Reference proteome</keyword>
<keyword id="KW-0964">Secreted</keyword>
<keyword id="KW-0732">Signal</keyword>
<organism>
    <name type="scientific">Arabidopsis thaliana</name>
    <name type="common">Mouse-ear cress</name>
    <dbReference type="NCBI Taxonomy" id="3702"/>
    <lineage>
        <taxon>Eukaryota</taxon>
        <taxon>Viridiplantae</taxon>
        <taxon>Streptophyta</taxon>
        <taxon>Embryophyta</taxon>
        <taxon>Tracheophyta</taxon>
        <taxon>Spermatophyta</taxon>
        <taxon>Magnoliopsida</taxon>
        <taxon>eudicotyledons</taxon>
        <taxon>Gunneridae</taxon>
        <taxon>Pentapetalae</taxon>
        <taxon>rosids</taxon>
        <taxon>malvids</taxon>
        <taxon>Brassicales</taxon>
        <taxon>Brassicaceae</taxon>
        <taxon>Camelineae</taxon>
        <taxon>Arabidopsis</taxon>
    </lineage>
</organism>